<keyword id="KW-0025">Alternative splicing</keyword>
<keyword id="KW-0472">Membrane</keyword>
<keyword id="KW-1267">Proteomics identification</keyword>
<keyword id="KW-1185">Reference proteome</keyword>
<keyword id="KW-0812">Transmembrane</keyword>
<keyword id="KW-1133">Transmembrane helix</keyword>
<name>CC020_HUMAN</name>
<comment type="interaction">
    <interactant intactId="EBI-53997188">
        <id>Q8ND61</id>
    </interactant>
    <interactant intactId="EBI-1765160">
        <id>Q9NR09</id>
        <label>BIRC6</label>
    </interactant>
    <organismsDiffer>false</organismsDiffer>
    <experiments>2</experiments>
</comment>
<comment type="subcellular location">
    <subcellularLocation>
        <location evidence="7">Membrane</location>
        <topology evidence="7">Single-pass membrane protein</topology>
    </subcellularLocation>
</comment>
<comment type="alternative products">
    <event type="alternative splicing"/>
    <isoform>
        <id>Q8ND61-1</id>
        <name>1</name>
        <sequence type="displayed"/>
    </isoform>
    <isoform>
        <id>Q8ND61-2</id>
        <name>2</name>
        <sequence type="described" ref="VSP_017722"/>
    </isoform>
</comment>
<feature type="chain" id="PRO_0000228843" description="Uncharacterized protein C3orf20">
    <location>
        <begin position="1"/>
        <end position="904"/>
    </location>
</feature>
<feature type="transmembrane region" description="Helical" evidence="1">
    <location>
        <begin position="778"/>
        <end position="798"/>
    </location>
</feature>
<feature type="region of interest" description="Disordered" evidence="2">
    <location>
        <begin position="247"/>
        <end position="275"/>
    </location>
</feature>
<feature type="region of interest" description="Disordered" evidence="2">
    <location>
        <begin position="328"/>
        <end position="360"/>
    </location>
</feature>
<feature type="compositionally biased region" description="Polar residues" evidence="2">
    <location>
        <begin position="342"/>
        <end position="360"/>
    </location>
</feature>
<feature type="splice variant" id="VSP_017722" description="In isoform 2." evidence="5 6">
    <location>
        <begin position="1"/>
        <end position="122"/>
    </location>
</feature>
<feature type="sequence variant" id="VAR_027886" description="In dbSNP:rs17040154.">
    <original>G</original>
    <variation>D</variation>
    <location>
        <position position="42"/>
    </location>
</feature>
<feature type="sequence variant" id="VAR_027887" description="In dbSNP:rs9821143.">
    <original>D</original>
    <variation>N</variation>
    <location>
        <position position="65"/>
    </location>
</feature>
<feature type="sequence variant" id="VAR_025722" description="In dbSNP:rs17040196.">
    <original>A</original>
    <variation>T</variation>
    <location>
        <position position="176"/>
    </location>
</feature>
<feature type="sequence variant" id="VAR_056770" description="In dbSNP:rs34230332.">
    <original>Q</original>
    <variation>R</variation>
    <location>
        <position position="205"/>
    </location>
</feature>
<feature type="sequence variant" id="VAR_027888" description="In dbSNP:rs17852774." evidence="4">
    <original>S</original>
    <variation>Y</variation>
    <location>
        <position position="230"/>
    </location>
</feature>
<feature type="sequence variant" id="VAR_027889" description="In dbSNP:rs17040196." evidence="3 4">
    <original>A</original>
    <variation>T</variation>
    <location>
        <position position="298"/>
    </location>
</feature>
<feature type="sequence variant" id="VAR_027890" description="In dbSNP:rs6765537." evidence="3 4">
    <original>I</original>
    <variation>V</variation>
    <location>
        <position position="407"/>
    </location>
</feature>
<feature type="sequence variant" id="VAR_027891" description="In dbSNP:rs6790129." evidence="3 4">
    <original>L</original>
    <variation>V</variation>
    <location>
        <position position="422"/>
    </location>
</feature>
<feature type="sequence variant" id="VAR_056771" description="In dbSNP:rs34045813.">
    <original>A</original>
    <variation>V</variation>
    <location>
        <position position="689"/>
    </location>
</feature>
<gene>
    <name type="primary">C3orf20</name>
</gene>
<proteinExistence type="evidence at protein level"/>
<protein>
    <recommendedName>
        <fullName>Uncharacterized protein C3orf20</fullName>
    </recommendedName>
</protein>
<evidence type="ECO:0000255" key="1"/>
<evidence type="ECO:0000256" key="2">
    <source>
        <dbReference type="SAM" id="MobiDB-lite"/>
    </source>
</evidence>
<evidence type="ECO:0000269" key="3">
    <source>
    </source>
</evidence>
<evidence type="ECO:0000269" key="4">
    <source>
    </source>
</evidence>
<evidence type="ECO:0000303" key="5">
    <source>
    </source>
</evidence>
<evidence type="ECO:0000303" key="6">
    <source>
    </source>
</evidence>
<evidence type="ECO:0000305" key="7"/>
<sequence>MSYIKSNLELYQQYTAMAPKLLARISKLLMICQNAGISVPKGIRNIFEFTWEELISDPSVPTPSDILGLEVSFGAPLVVLMEPTFVQVPTLKKPLPPPPPAPPRPVLLATTGAAKRSTLSPTMARQVRTHQETLNRFQQQSIHLLTELLRLKMKAMVESMSVGANPLDITRRFVEASQLLHLNAKEMAFNCLISTAGRSGYSSGQLWKESLANMSAIGVNSPYQLIYHSSTACLSFSLSAGKEAKKKIGKSRTTEDVSMPPLHRGVGTPANSLEFSDPCPEAREKLQELCRHIEAERATWKGRNISYPMILRNYKAKMPSHLMLARKGDSQTPGLHYPPTAGAQTLSPTSHPSSANHHFSQHCQEGKAPKKAFKFHYTFYDGSSFVYYPSGNVAVCQIPTCCRGRTITCLFNDIPGFSLLALFNTEGQGCVHYNLKTSCPYVLILDEEGGTTNDQQGYVVHKWSWTSRTETLLSLEYKVNEEMKLKVLGQDSITVTFTSLNETVTLTVSANNCPHGMAYDKRLNRRISNMDDKVYKMSRALAEIKKRFQKTVTQFINSILLAAGLFTIEYPTKKEEEEFVRFKMRSRTHPERLPKLSLYSGESLLRSQSGHLESSIAETLKDEPESAPVSPVRKTTKIHTKAKVTSRGKAREGRSPTRWAALPSDCPLVLRKLMLKEDTRAGCKCLVKAPLVSDVELERFLLAPRDPSQVLVFGIISSQNYTSTGQLQWLLNTLYNHQQRGRGSPCIQCRYDSYRLLQYDLDSPLQEDPPLMVKKNSVVQGMILMFAGGKLIFGGRVLNGYGLSKQNLLKQIFRSQQDYKMGYFLPDDYKFSVPNSVLSLEDSESVKKAESEDIQGSSSSLALEDYVEKELSLEAEKTREPEVELHPLSRDSKITSWKKQASKK</sequence>
<dbReference type="EMBL" id="AL136781">
    <property type="protein sequence ID" value="CAB66715.1"/>
    <property type="molecule type" value="mRNA"/>
</dbReference>
<dbReference type="EMBL" id="AL834386">
    <property type="protein sequence ID" value="CAD39049.1"/>
    <property type="molecule type" value="mRNA"/>
</dbReference>
<dbReference type="EMBL" id="BC030599">
    <property type="protein sequence ID" value="AAH30599.1"/>
    <property type="molecule type" value="mRNA"/>
</dbReference>
<dbReference type="EMBL" id="BC038406">
    <property type="protein sequence ID" value="AAH38406.2"/>
    <property type="molecule type" value="mRNA"/>
</dbReference>
<dbReference type="CCDS" id="CCDS33706.1">
    <molecule id="Q8ND61-1"/>
</dbReference>
<dbReference type="CCDS" id="CCDS54555.1">
    <molecule id="Q8ND61-2"/>
</dbReference>
<dbReference type="RefSeq" id="NP_001171886.1">
    <molecule id="Q8ND61-2"/>
    <property type="nucleotide sequence ID" value="NM_001184957.2"/>
</dbReference>
<dbReference type="RefSeq" id="NP_001171887.1">
    <molecule id="Q8ND61-2"/>
    <property type="nucleotide sequence ID" value="NM_001184958.2"/>
</dbReference>
<dbReference type="RefSeq" id="NP_115513.4">
    <molecule id="Q8ND61-1"/>
    <property type="nucleotide sequence ID" value="NM_032137.4"/>
</dbReference>
<dbReference type="BioGRID" id="123872">
    <property type="interactions" value="13"/>
</dbReference>
<dbReference type="FunCoup" id="Q8ND61">
    <property type="interactions" value="204"/>
</dbReference>
<dbReference type="IntAct" id="Q8ND61">
    <property type="interactions" value="4"/>
</dbReference>
<dbReference type="STRING" id="9606.ENSP00000253697"/>
<dbReference type="GlyGen" id="Q8ND61">
    <property type="glycosylation" value="2 sites, 1 O-linked glycan (1 site)"/>
</dbReference>
<dbReference type="iPTMnet" id="Q8ND61"/>
<dbReference type="PhosphoSitePlus" id="Q8ND61"/>
<dbReference type="BioMuta" id="C3orf20"/>
<dbReference type="DMDM" id="116241285"/>
<dbReference type="jPOST" id="Q8ND61"/>
<dbReference type="MassIVE" id="Q8ND61"/>
<dbReference type="PaxDb" id="9606-ENSP00000253697"/>
<dbReference type="PeptideAtlas" id="Q8ND61"/>
<dbReference type="ProteomicsDB" id="72981">
    <molecule id="Q8ND61-1"/>
</dbReference>
<dbReference type="ProteomicsDB" id="72982">
    <molecule id="Q8ND61-2"/>
</dbReference>
<dbReference type="Antibodypedia" id="45080">
    <property type="antibodies" value="67 antibodies from 15 providers"/>
</dbReference>
<dbReference type="DNASU" id="84077"/>
<dbReference type="Ensembl" id="ENST00000253697.8">
    <molecule id="Q8ND61-1"/>
    <property type="protein sequence ID" value="ENSP00000253697.3"/>
    <property type="gene ID" value="ENSG00000131379.10"/>
</dbReference>
<dbReference type="Ensembl" id="ENST00000412910.1">
    <molecule id="Q8ND61-2"/>
    <property type="protein sequence ID" value="ENSP00000396081.1"/>
    <property type="gene ID" value="ENSG00000131379.10"/>
</dbReference>
<dbReference type="Ensembl" id="ENST00000435614.5">
    <molecule id="Q8ND61-2"/>
    <property type="protein sequence ID" value="ENSP00000402933.1"/>
    <property type="gene ID" value="ENSG00000131379.10"/>
</dbReference>
<dbReference type="GeneID" id="84077"/>
<dbReference type="KEGG" id="hsa:84077"/>
<dbReference type="MANE-Select" id="ENST00000253697.8">
    <property type="protein sequence ID" value="ENSP00000253697.3"/>
    <property type="RefSeq nucleotide sequence ID" value="NM_032137.5"/>
    <property type="RefSeq protein sequence ID" value="NP_115513.4"/>
</dbReference>
<dbReference type="UCSC" id="uc003byy.4">
    <molecule id="Q8ND61-1"/>
    <property type="organism name" value="human"/>
</dbReference>
<dbReference type="AGR" id="HGNC:25320"/>
<dbReference type="CTD" id="84077"/>
<dbReference type="DisGeNET" id="84077"/>
<dbReference type="GeneCards" id="C3orf20"/>
<dbReference type="HGNC" id="HGNC:25320">
    <property type="gene designation" value="C3orf20"/>
</dbReference>
<dbReference type="HPA" id="ENSG00000131379">
    <property type="expression patterns" value="Tissue enriched (testis)"/>
</dbReference>
<dbReference type="MIM" id="619992">
    <property type="type" value="gene"/>
</dbReference>
<dbReference type="neXtProt" id="NX_Q8ND61"/>
<dbReference type="OpenTargets" id="ENSG00000131379"/>
<dbReference type="PharmGKB" id="PA134977176"/>
<dbReference type="VEuPathDB" id="HostDB:ENSG00000131379"/>
<dbReference type="eggNOG" id="KOG4106">
    <property type="taxonomic scope" value="Eukaryota"/>
</dbReference>
<dbReference type="GeneTree" id="ENSGT00940000153655"/>
<dbReference type="HOGENOM" id="CLU_015383_0_0_1"/>
<dbReference type="InParanoid" id="Q8ND61"/>
<dbReference type="OMA" id="QEMCRHI"/>
<dbReference type="OrthoDB" id="6351677at2759"/>
<dbReference type="PAN-GO" id="Q8ND61">
    <property type="GO annotations" value="0 GO annotations based on evolutionary models"/>
</dbReference>
<dbReference type="PhylomeDB" id="Q8ND61"/>
<dbReference type="TreeFam" id="TF333451"/>
<dbReference type="PathwayCommons" id="Q8ND61"/>
<dbReference type="SignaLink" id="Q8ND61"/>
<dbReference type="BioGRID-ORCS" id="84077">
    <property type="hits" value="6 hits in 1127 CRISPR screens"/>
</dbReference>
<dbReference type="ChiTaRS" id="C3orf20">
    <property type="organism name" value="human"/>
</dbReference>
<dbReference type="GenomeRNAi" id="84077"/>
<dbReference type="Pharos" id="Q8ND61">
    <property type="development level" value="Tdark"/>
</dbReference>
<dbReference type="PRO" id="PR:Q8ND61"/>
<dbReference type="Proteomes" id="UP000005640">
    <property type="component" value="Chromosome 3"/>
</dbReference>
<dbReference type="RNAct" id="Q8ND61">
    <property type="molecule type" value="protein"/>
</dbReference>
<dbReference type="Bgee" id="ENSG00000131379">
    <property type="expression patterns" value="Expressed in male germ line stem cell (sensu Vertebrata) in testis and 39 other cell types or tissues"/>
</dbReference>
<dbReference type="ExpressionAtlas" id="Q8ND61">
    <property type="expression patterns" value="baseline and differential"/>
</dbReference>
<dbReference type="GO" id="GO:0005737">
    <property type="term" value="C:cytoplasm"/>
    <property type="evidence" value="ECO:0000314"/>
    <property type="project" value="LIFEdb"/>
</dbReference>
<dbReference type="GO" id="GO:0016020">
    <property type="term" value="C:membrane"/>
    <property type="evidence" value="ECO:0007669"/>
    <property type="project" value="UniProtKB-SubCell"/>
</dbReference>
<dbReference type="InterPro" id="IPR029281">
    <property type="entry name" value="FAM194_C"/>
</dbReference>
<dbReference type="PANTHER" id="PTHR23093">
    <property type="entry name" value="SIMILAR TO CHROMOSOME 3 OPEN READING FRAME 20"/>
    <property type="match status" value="1"/>
</dbReference>
<dbReference type="PANTHER" id="PTHR23093:SF20">
    <property type="entry name" value="SIMILAR TO CHROMOSOME 3 OPEN READING FRAME 20"/>
    <property type="match status" value="1"/>
</dbReference>
<dbReference type="Pfam" id="PF14977">
    <property type="entry name" value="FAM194"/>
    <property type="match status" value="1"/>
</dbReference>
<reference key="1">
    <citation type="journal article" date="2001" name="Genome Res.">
        <title>Towards a catalog of human genes and proteins: sequencing and analysis of 500 novel complete protein coding human cDNAs.</title>
        <authorList>
            <person name="Wiemann S."/>
            <person name="Weil B."/>
            <person name="Wellenreuther R."/>
            <person name="Gassenhuber J."/>
            <person name="Glassl S."/>
            <person name="Ansorge W."/>
            <person name="Boecher M."/>
            <person name="Bloecker H."/>
            <person name="Bauersachs S."/>
            <person name="Blum H."/>
            <person name="Lauber J."/>
            <person name="Duesterhoeft A."/>
            <person name="Beyer A."/>
            <person name="Koehrer K."/>
            <person name="Strack N."/>
            <person name="Mewes H.-W."/>
            <person name="Ottenwaelder B."/>
            <person name="Obermaier B."/>
            <person name="Tampe J."/>
            <person name="Heubner D."/>
            <person name="Wambutt R."/>
            <person name="Korn B."/>
            <person name="Klein M."/>
            <person name="Poustka A."/>
        </authorList>
    </citation>
    <scope>NUCLEOTIDE SEQUENCE [LARGE SCALE MRNA] (ISOFORMS 1 AND 2)</scope>
    <scope>VARIANTS THR-298; VAL-407 AND VAL-422</scope>
    <source>
        <tissue>Testis</tissue>
    </source>
</reference>
<reference key="2">
    <citation type="journal article" date="2004" name="Genome Res.">
        <title>The status, quality, and expansion of the NIH full-length cDNA project: the Mammalian Gene Collection (MGC).</title>
        <authorList>
            <consortium name="The MGC Project Team"/>
        </authorList>
    </citation>
    <scope>NUCLEOTIDE SEQUENCE [LARGE SCALE MRNA] (ISOFORMS 1 AND 2)</scope>
    <scope>VARIANTS TYR-230; THR-298; VAL-407 AND VAL-422</scope>
    <source>
        <tissue>Brain</tissue>
    </source>
</reference>
<accession>Q8ND61</accession>
<accession>Q7L0U6</accession>
<accession>Q8NCP2</accession>
<accession>Q9H0I7</accession>
<organism>
    <name type="scientific">Homo sapiens</name>
    <name type="common">Human</name>
    <dbReference type="NCBI Taxonomy" id="9606"/>
    <lineage>
        <taxon>Eukaryota</taxon>
        <taxon>Metazoa</taxon>
        <taxon>Chordata</taxon>
        <taxon>Craniata</taxon>
        <taxon>Vertebrata</taxon>
        <taxon>Euteleostomi</taxon>
        <taxon>Mammalia</taxon>
        <taxon>Eutheria</taxon>
        <taxon>Euarchontoglires</taxon>
        <taxon>Primates</taxon>
        <taxon>Haplorrhini</taxon>
        <taxon>Catarrhini</taxon>
        <taxon>Hominidae</taxon>
        <taxon>Homo</taxon>
    </lineage>
</organism>